<evidence type="ECO:0000255" key="1">
    <source>
        <dbReference type="HAMAP-Rule" id="MF_01251"/>
    </source>
</evidence>
<evidence type="ECO:0000255" key="2">
    <source>
        <dbReference type="PROSITE-ProRule" id="PRU01266"/>
    </source>
</evidence>
<sequence length="599" mass="68047">MTKDELKALGWDRCDVVIVSGDAYVDHPSFGVAIIGRVLEKAGFRVGIIAQPDVTDKTSFSRLGEPRLCFCVTSGNVDSMVNNYTANKRLRSDDDYSPGNRPHMRPDRAVTVYCNKIRETYKTIPIITGGLEASLRRFAHYDYWDDKVRQSILADAPADMIVYGMGEKTIVDVVGRLKNGERIADITDIRGTTYKTRKIGDLSDFIELPDFKAVSTDKRAFAEAFKTFYDEQDPYYGHTLVQRHPKTIIVQNPPALPLTTAEMDAIYDLPYTRYPHPSYKEDIPALRTVRFSITSHRGCFGGCAFCAITAHQGRMIQSRSQESILREIRALTKLPEFKGTISDIGGPTADMYMLGCSKRSTQGMCRDKLCLYPEPCPNLNKDHSRLITLLNEVRKVPGVKNVFIGSGIRYDLAMQDEQYLYHICRQNVSGQLKVAPEHVSRNVTDAMCKPSIEAYDKFVSKYREINKELGKEQYIIPYFISAHPGCTLKDAIQLAEYVRDMGYYVEQVQDFTPTPSTLSTCMYYTGYNPYTGQEVYVPKSVEERRMYRALLQYKNPENYDLVKKALISANRKDLIGYGQNCLIKPVRPAIYKKPGRRKP</sequence>
<feature type="chain" id="PRO_1000067197" description="UPF0313 protein UNCMA_01890">
    <location>
        <begin position="1"/>
        <end position="599"/>
    </location>
</feature>
<feature type="domain" description="Radical SAM core" evidence="2">
    <location>
        <begin position="281"/>
        <end position="557"/>
    </location>
</feature>
<feature type="binding site" evidence="1">
    <location>
        <position position="299"/>
    </location>
    <ligand>
        <name>[4Fe-4S] cluster</name>
        <dbReference type="ChEBI" id="CHEBI:49883"/>
        <note>4Fe-4S-S-AdoMet</note>
    </ligand>
</feature>
<feature type="binding site" evidence="1">
    <location>
        <position position="303"/>
    </location>
    <ligand>
        <name>[4Fe-4S] cluster</name>
        <dbReference type="ChEBI" id="CHEBI:49883"/>
        <note>4Fe-4S-S-AdoMet</note>
    </ligand>
</feature>
<feature type="binding site" evidence="1">
    <location>
        <position position="306"/>
    </location>
    <ligand>
        <name>[4Fe-4S] cluster</name>
        <dbReference type="ChEBI" id="CHEBI:49883"/>
        <note>4Fe-4S-S-AdoMet</note>
    </ligand>
</feature>
<gene>
    <name type="ordered locus">UNCMA_01890</name>
    <name type="ORF">RRC361</name>
</gene>
<reference key="1">
    <citation type="journal article" date="2006" name="Science">
        <title>Genome of rice cluster I archaea -- the key methane producers in the rice rhizosphere.</title>
        <authorList>
            <person name="Erkel C."/>
            <person name="Kube M."/>
            <person name="Reinhardt R."/>
            <person name="Liesack W."/>
        </authorList>
    </citation>
    <scope>NUCLEOTIDE SEQUENCE [LARGE SCALE GENOMIC DNA]</scope>
    <source>
        <strain>DSM 22066 / NBRC 105507 / MRE50</strain>
    </source>
</reference>
<proteinExistence type="inferred from homology"/>
<comment type="cofactor">
    <cofactor evidence="1">
        <name>[4Fe-4S] cluster</name>
        <dbReference type="ChEBI" id="CHEBI:49883"/>
    </cofactor>
    <text evidence="1">Binds 1 [4Fe-4S] cluster. The cluster is coordinated with 3 cysteines and an exchangeable S-adenosyl-L-methionine.</text>
</comment>
<comment type="similarity">
    <text evidence="1">Belongs to the UPF0313 family.</text>
</comment>
<protein>
    <recommendedName>
        <fullName evidence="1">UPF0313 protein UNCMA_01890</fullName>
    </recommendedName>
</protein>
<organism>
    <name type="scientific">Methanocella arvoryzae (strain DSM 22066 / NBRC 105507 / MRE50)</name>
    <dbReference type="NCBI Taxonomy" id="351160"/>
    <lineage>
        <taxon>Archaea</taxon>
        <taxon>Methanobacteriati</taxon>
        <taxon>Methanobacteriota</taxon>
        <taxon>Stenosarchaea group</taxon>
        <taxon>Methanomicrobia</taxon>
        <taxon>Methanocellales</taxon>
        <taxon>Methanocellaceae</taxon>
        <taxon>Methanocella</taxon>
    </lineage>
</organism>
<name>Y189_METAR</name>
<accession>Q0W0L6</accession>
<dbReference type="EMBL" id="AM114193">
    <property type="protein sequence ID" value="CAJ38077.1"/>
    <property type="molecule type" value="Genomic_DNA"/>
</dbReference>
<dbReference type="STRING" id="351160.RRC361"/>
<dbReference type="KEGG" id="rci:RRC361"/>
<dbReference type="eggNOG" id="arCOG04984">
    <property type="taxonomic scope" value="Archaea"/>
</dbReference>
<dbReference type="Proteomes" id="UP000000663">
    <property type="component" value="Chromosome"/>
</dbReference>
<dbReference type="GO" id="GO:0051539">
    <property type="term" value="F:4 iron, 4 sulfur cluster binding"/>
    <property type="evidence" value="ECO:0007669"/>
    <property type="project" value="UniProtKB-KW"/>
</dbReference>
<dbReference type="GO" id="GO:0003824">
    <property type="term" value="F:catalytic activity"/>
    <property type="evidence" value="ECO:0007669"/>
    <property type="project" value="InterPro"/>
</dbReference>
<dbReference type="GO" id="GO:0005506">
    <property type="term" value="F:iron ion binding"/>
    <property type="evidence" value="ECO:0007669"/>
    <property type="project" value="UniProtKB-UniRule"/>
</dbReference>
<dbReference type="Gene3D" id="3.80.30.20">
    <property type="entry name" value="tm_1862 like domain"/>
    <property type="match status" value="1"/>
</dbReference>
<dbReference type="HAMAP" id="MF_01251">
    <property type="entry name" value="UPF0313"/>
    <property type="match status" value="1"/>
</dbReference>
<dbReference type="InterPro" id="IPR006638">
    <property type="entry name" value="Elp3/MiaA/NifB-like_rSAM"/>
</dbReference>
<dbReference type="InterPro" id="IPR007197">
    <property type="entry name" value="rSAM"/>
</dbReference>
<dbReference type="InterPro" id="IPR023404">
    <property type="entry name" value="rSAM_horseshoe"/>
</dbReference>
<dbReference type="InterPro" id="IPR022946">
    <property type="entry name" value="UPF0313"/>
</dbReference>
<dbReference type="InterPro" id="IPR024560">
    <property type="entry name" value="UPF0313_C"/>
</dbReference>
<dbReference type="InterPro" id="IPR013704">
    <property type="entry name" value="UPF0313_N"/>
</dbReference>
<dbReference type="NCBIfam" id="TIGR03904">
    <property type="entry name" value="SAM_YgiQ"/>
    <property type="match status" value="1"/>
</dbReference>
<dbReference type="PANTHER" id="PTHR32331">
    <property type="entry name" value="UPF0313 PROTEIN YGIQ"/>
    <property type="match status" value="1"/>
</dbReference>
<dbReference type="PANTHER" id="PTHR32331:SF0">
    <property type="entry name" value="UPF0313 PROTEIN YGIQ"/>
    <property type="match status" value="1"/>
</dbReference>
<dbReference type="Pfam" id="PF11842">
    <property type="entry name" value="DUF3362"/>
    <property type="match status" value="1"/>
</dbReference>
<dbReference type="Pfam" id="PF08497">
    <property type="entry name" value="Radical_SAM_N"/>
    <property type="match status" value="1"/>
</dbReference>
<dbReference type="SFLD" id="SFLDG01082">
    <property type="entry name" value="B12-binding_domain_containing"/>
    <property type="match status" value="1"/>
</dbReference>
<dbReference type="SFLD" id="SFLDS00029">
    <property type="entry name" value="Radical_SAM"/>
    <property type="match status" value="1"/>
</dbReference>
<dbReference type="SFLD" id="SFLDG01069">
    <property type="entry name" value="UPF0313"/>
    <property type="match status" value="1"/>
</dbReference>
<dbReference type="SMART" id="SM00729">
    <property type="entry name" value="Elp3"/>
    <property type="match status" value="1"/>
</dbReference>
<dbReference type="SUPFAM" id="SSF102114">
    <property type="entry name" value="Radical SAM enzymes"/>
    <property type="match status" value="1"/>
</dbReference>
<dbReference type="PROSITE" id="PS51918">
    <property type="entry name" value="RADICAL_SAM"/>
    <property type="match status" value="1"/>
</dbReference>
<keyword id="KW-0004">4Fe-4S</keyword>
<keyword id="KW-0408">Iron</keyword>
<keyword id="KW-0411">Iron-sulfur</keyword>
<keyword id="KW-0479">Metal-binding</keyword>
<keyword id="KW-1185">Reference proteome</keyword>
<keyword id="KW-0949">S-adenosyl-L-methionine</keyword>